<gene>
    <name evidence="1" type="primary">dtd</name>
    <name type="ordered locus">RALTA_A0447</name>
</gene>
<accession>B2AH66</accession>
<dbReference type="EC" id="3.1.1.96" evidence="1"/>
<dbReference type="EMBL" id="CU633749">
    <property type="protein sequence ID" value="CAP63115.1"/>
    <property type="molecule type" value="Genomic_DNA"/>
</dbReference>
<dbReference type="RefSeq" id="WP_012351776.1">
    <property type="nucleotide sequence ID" value="NC_010528.1"/>
</dbReference>
<dbReference type="SMR" id="B2AH66"/>
<dbReference type="GeneID" id="29762669"/>
<dbReference type="KEGG" id="cti:RALTA_A0447"/>
<dbReference type="eggNOG" id="COG1490">
    <property type="taxonomic scope" value="Bacteria"/>
</dbReference>
<dbReference type="HOGENOM" id="CLU_076901_1_1_4"/>
<dbReference type="BioCyc" id="CTAI977880:RALTA_RS02185-MONOMER"/>
<dbReference type="Proteomes" id="UP000001692">
    <property type="component" value="Chromosome 1"/>
</dbReference>
<dbReference type="GO" id="GO:0005737">
    <property type="term" value="C:cytoplasm"/>
    <property type="evidence" value="ECO:0007669"/>
    <property type="project" value="UniProtKB-SubCell"/>
</dbReference>
<dbReference type="GO" id="GO:0051500">
    <property type="term" value="F:D-tyrosyl-tRNA(Tyr) deacylase activity"/>
    <property type="evidence" value="ECO:0007669"/>
    <property type="project" value="TreeGrafter"/>
</dbReference>
<dbReference type="GO" id="GO:0106026">
    <property type="term" value="F:Gly-tRNA(Ala) deacylase activity"/>
    <property type="evidence" value="ECO:0007669"/>
    <property type="project" value="UniProtKB-UniRule"/>
</dbReference>
<dbReference type="GO" id="GO:0043908">
    <property type="term" value="F:Ser(Gly)-tRNA(Ala) hydrolase activity"/>
    <property type="evidence" value="ECO:0007669"/>
    <property type="project" value="UniProtKB-UniRule"/>
</dbReference>
<dbReference type="GO" id="GO:0000049">
    <property type="term" value="F:tRNA binding"/>
    <property type="evidence" value="ECO:0007669"/>
    <property type="project" value="UniProtKB-UniRule"/>
</dbReference>
<dbReference type="GO" id="GO:0019478">
    <property type="term" value="P:D-amino acid catabolic process"/>
    <property type="evidence" value="ECO:0007669"/>
    <property type="project" value="UniProtKB-UniRule"/>
</dbReference>
<dbReference type="CDD" id="cd00563">
    <property type="entry name" value="Dtyr_deacylase"/>
    <property type="match status" value="1"/>
</dbReference>
<dbReference type="FunFam" id="3.50.80.10:FF:000001">
    <property type="entry name" value="D-aminoacyl-tRNA deacylase"/>
    <property type="match status" value="1"/>
</dbReference>
<dbReference type="Gene3D" id="3.50.80.10">
    <property type="entry name" value="D-tyrosyl-tRNA(Tyr) deacylase"/>
    <property type="match status" value="1"/>
</dbReference>
<dbReference type="HAMAP" id="MF_00518">
    <property type="entry name" value="Deacylase_Dtd"/>
    <property type="match status" value="1"/>
</dbReference>
<dbReference type="InterPro" id="IPR003732">
    <property type="entry name" value="Daa-tRNA_deacyls_DTD"/>
</dbReference>
<dbReference type="InterPro" id="IPR023509">
    <property type="entry name" value="DTD-like_sf"/>
</dbReference>
<dbReference type="NCBIfam" id="TIGR00256">
    <property type="entry name" value="D-aminoacyl-tRNA deacylase"/>
    <property type="match status" value="1"/>
</dbReference>
<dbReference type="PANTHER" id="PTHR10472:SF5">
    <property type="entry name" value="D-AMINOACYL-TRNA DEACYLASE 1"/>
    <property type="match status" value="1"/>
</dbReference>
<dbReference type="PANTHER" id="PTHR10472">
    <property type="entry name" value="D-TYROSYL-TRNA TYR DEACYLASE"/>
    <property type="match status" value="1"/>
</dbReference>
<dbReference type="Pfam" id="PF02580">
    <property type="entry name" value="Tyr_Deacylase"/>
    <property type="match status" value="1"/>
</dbReference>
<dbReference type="SUPFAM" id="SSF69500">
    <property type="entry name" value="DTD-like"/>
    <property type="match status" value="1"/>
</dbReference>
<comment type="function">
    <text evidence="1">An aminoacyl-tRNA editing enzyme that deacylates mischarged D-aminoacyl-tRNAs. Also deacylates mischarged glycyl-tRNA(Ala), protecting cells against glycine mischarging by AlaRS. Acts via tRNA-based rather than protein-based catalysis; rejects L-amino acids rather than detecting D-amino acids in the active site. By recycling D-aminoacyl-tRNA to D-amino acids and free tRNA molecules, this enzyme counteracts the toxicity associated with the formation of D-aminoacyl-tRNA entities in vivo and helps enforce protein L-homochirality.</text>
</comment>
<comment type="catalytic activity">
    <reaction evidence="1">
        <text>glycyl-tRNA(Ala) + H2O = tRNA(Ala) + glycine + H(+)</text>
        <dbReference type="Rhea" id="RHEA:53744"/>
        <dbReference type="Rhea" id="RHEA-COMP:9657"/>
        <dbReference type="Rhea" id="RHEA-COMP:13640"/>
        <dbReference type="ChEBI" id="CHEBI:15377"/>
        <dbReference type="ChEBI" id="CHEBI:15378"/>
        <dbReference type="ChEBI" id="CHEBI:57305"/>
        <dbReference type="ChEBI" id="CHEBI:78442"/>
        <dbReference type="ChEBI" id="CHEBI:78522"/>
        <dbReference type="EC" id="3.1.1.96"/>
    </reaction>
</comment>
<comment type="catalytic activity">
    <reaction evidence="1">
        <text>a D-aminoacyl-tRNA + H2O = a tRNA + a D-alpha-amino acid + H(+)</text>
        <dbReference type="Rhea" id="RHEA:13953"/>
        <dbReference type="Rhea" id="RHEA-COMP:10123"/>
        <dbReference type="Rhea" id="RHEA-COMP:10124"/>
        <dbReference type="ChEBI" id="CHEBI:15377"/>
        <dbReference type="ChEBI" id="CHEBI:15378"/>
        <dbReference type="ChEBI" id="CHEBI:59871"/>
        <dbReference type="ChEBI" id="CHEBI:78442"/>
        <dbReference type="ChEBI" id="CHEBI:79333"/>
        <dbReference type="EC" id="3.1.1.96"/>
    </reaction>
</comment>
<comment type="subunit">
    <text evidence="1">Homodimer.</text>
</comment>
<comment type="subcellular location">
    <subcellularLocation>
        <location evidence="1">Cytoplasm</location>
    </subcellularLocation>
</comment>
<comment type="domain">
    <text evidence="1">A Gly-cisPro motif from one monomer fits into the active site of the other monomer to allow specific chiral rejection of L-amino acids.</text>
</comment>
<comment type="similarity">
    <text evidence="1">Belongs to the DTD family.</text>
</comment>
<organism>
    <name type="scientific">Cupriavidus taiwanensis (strain DSM 17343 / BCRC 17206 / CCUG 44338 / CIP 107171 / LMG 19424 / R1)</name>
    <name type="common">Ralstonia taiwanensis (strain LMG 19424)</name>
    <dbReference type="NCBI Taxonomy" id="977880"/>
    <lineage>
        <taxon>Bacteria</taxon>
        <taxon>Pseudomonadati</taxon>
        <taxon>Pseudomonadota</taxon>
        <taxon>Betaproteobacteria</taxon>
        <taxon>Burkholderiales</taxon>
        <taxon>Burkholderiaceae</taxon>
        <taxon>Cupriavidus</taxon>
    </lineage>
</organism>
<evidence type="ECO:0000255" key="1">
    <source>
        <dbReference type="HAMAP-Rule" id="MF_00518"/>
    </source>
</evidence>
<protein>
    <recommendedName>
        <fullName evidence="1">D-aminoacyl-tRNA deacylase</fullName>
        <shortName evidence="1">DTD</shortName>
        <ecNumber evidence="1">3.1.1.96</ecNumber>
    </recommendedName>
    <alternativeName>
        <fullName evidence="1">Gly-tRNA(Ala) deacylase</fullName>
    </alternativeName>
</protein>
<reference key="1">
    <citation type="journal article" date="2008" name="Genome Res.">
        <title>Genome sequence of the beta-rhizobium Cupriavidus taiwanensis and comparative genomics of rhizobia.</title>
        <authorList>
            <person name="Amadou C."/>
            <person name="Pascal G."/>
            <person name="Mangenot S."/>
            <person name="Glew M."/>
            <person name="Bontemps C."/>
            <person name="Capela D."/>
            <person name="Carrere S."/>
            <person name="Cruveiller S."/>
            <person name="Dossat C."/>
            <person name="Lajus A."/>
            <person name="Marchetti M."/>
            <person name="Poinsot V."/>
            <person name="Rouy Z."/>
            <person name="Servin B."/>
            <person name="Saad M."/>
            <person name="Schenowitz C."/>
            <person name="Barbe V."/>
            <person name="Batut J."/>
            <person name="Medigue C."/>
            <person name="Masson-Boivin C."/>
        </authorList>
    </citation>
    <scope>NUCLEOTIDE SEQUENCE [LARGE SCALE GENOMIC DNA]</scope>
    <source>
        <strain>DSM 17343 / BCRC 17206 / CCUG 44338 / CIP 107171 / LMG 19424 / R1</strain>
    </source>
</reference>
<sequence>MIALIQRVAQARVTVAGRTTGEIGAGLLALVCAERGDTEAQAERLLAKMLSYRVFSDADGKMNLPVQNMDGNGNPGGLLVVSQFTLAADTNSGTRPSFTPAASPEDGRRLYEHFVAQARAAHPQVQTGEFGAMMQVSLVNDGPVTFWLRVPPA</sequence>
<name>DTD_CUPTR</name>
<keyword id="KW-0963">Cytoplasm</keyword>
<keyword id="KW-0378">Hydrolase</keyword>
<keyword id="KW-0694">RNA-binding</keyword>
<keyword id="KW-0820">tRNA-binding</keyword>
<proteinExistence type="inferred from homology"/>
<feature type="chain" id="PRO_1000127512" description="D-aminoacyl-tRNA deacylase">
    <location>
        <begin position="1"/>
        <end position="153"/>
    </location>
</feature>
<feature type="short sequence motif" description="Gly-cisPro motif, important for rejection of L-amino acids" evidence="1">
    <location>
        <begin position="142"/>
        <end position="143"/>
    </location>
</feature>